<proteinExistence type="evidence at protein level"/>
<keyword id="KW-0221">Differentiation</keyword>
<keyword id="KW-0325">Glycoprotein</keyword>
<keyword id="KW-0339">Growth factor</keyword>
<keyword id="KW-0379">Hydroxylation</keyword>
<keyword id="KW-0539">Nucleus</keyword>
<keyword id="KW-1185">Reference proteome</keyword>
<keyword id="KW-0964">Secreted</keyword>
<keyword id="KW-0732">Signal</keyword>
<keyword id="KW-0765">Sulfation</keyword>
<feature type="signal peptide" evidence="3">
    <location>
        <begin position="1"/>
        <end position="27"/>
    </location>
</feature>
<feature type="propeptide" id="PRO_0000451979" evidence="2">
    <location>
        <begin position="28"/>
        <end position="130"/>
    </location>
</feature>
<feature type="peptide" id="PRO_0000451980" description="CLELn" evidence="2">
    <location>
        <begin position="131"/>
        <end position="143"/>
    </location>
</feature>
<feature type="region of interest" description="Disordered" evidence="6">
    <location>
        <begin position="74"/>
        <end position="143"/>
    </location>
</feature>
<feature type="short sequence motif" description="Nuclear localization signal" evidence="5">
    <location>
        <begin position="92"/>
        <end position="99"/>
    </location>
</feature>
<feature type="compositionally biased region" description="Polar residues" evidence="6">
    <location>
        <begin position="74"/>
        <end position="83"/>
    </location>
</feature>
<feature type="modified residue" description="Sulfotyrosine" evidence="2">
    <location>
        <position position="132"/>
    </location>
</feature>
<feature type="modified residue" description="Hydroxyproline" evidence="1">
    <location>
        <position position="140"/>
    </location>
</feature>
<feature type="glycosylation site" description="N-linked (GlcNAc...) asparagine" evidence="4">
    <location>
        <position position="60"/>
    </location>
</feature>
<comment type="function">
    <molecule>CLELn</molecule>
    <text evidence="2 7">Maintains the postembryonic root stem cell niche by regulating the expression levels and patterns of the transcription factor PLETHORA (PLT), mainly at the post-transcriptional level (By similarity). Promotes root elongation (PubMed:22815541).</text>
</comment>
<comment type="subunit">
    <molecule>CLELn</molecule>
    <text evidence="8">Binds to LRR receptor-like serine/threonine-protein kinases RGI1, RGI2 and RGI3 to trigger their dimerization with SERK proteins and subsequent signaling.</text>
</comment>
<comment type="subcellular location">
    <molecule>CLELn</molecule>
    <subcellularLocation>
        <location evidence="2">Secreted</location>
    </subcellularLocation>
    <subcellularLocation>
        <location evidence="5 7">Nucleus</location>
    </subcellularLocation>
</comment>
<comment type="tissue specificity">
    <text evidence="7">Expressed in root tips.</text>
</comment>
<comment type="developmental stage">
    <text evidence="7">Expressed specifically in the quiescent center (QC) of the root apical meristem (RAM).</text>
</comment>
<comment type="induction">
    <text evidence="7">Induced by auxin.</text>
</comment>
<comment type="PTM">
    <text evidence="2">The tyrosine sulfation is critical for the function of the peptide.</text>
</comment>
<comment type="miscellaneous">
    <text evidence="7">When applied in the extracellular space, triggers a root waving phenotype (PubMed:22815541). But seems to have a physiological nuclear subcellular location where it promotes root elongation (PubMed:22815541).</text>
</comment>
<comment type="similarity">
    <text evidence="11">Belongs to the RGF family.</text>
</comment>
<comment type="sequence caution" evidence="11">
    <conflict type="erroneous gene model prediction">
        <sequence resource="EMBL-CDS" id="CAB82669"/>
    </conflict>
</comment>
<organism>
    <name type="scientific">Arabidopsis thaliana</name>
    <name type="common">Mouse-ear cress</name>
    <dbReference type="NCBI Taxonomy" id="3702"/>
    <lineage>
        <taxon>Eukaryota</taxon>
        <taxon>Viridiplantae</taxon>
        <taxon>Streptophyta</taxon>
        <taxon>Embryophyta</taxon>
        <taxon>Tracheophyta</taxon>
        <taxon>Spermatophyta</taxon>
        <taxon>Magnoliopsida</taxon>
        <taxon>eudicotyledons</taxon>
        <taxon>Gunneridae</taxon>
        <taxon>Pentapetalae</taxon>
        <taxon>rosids</taxon>
        <taxon>malvids</taxon>
        <taxon>Brassicales</taxon>
        <taxon>Brassicaceae</taxon>
        <taxon>Camelineae</taxon>
        <taxon>Arabidopsis</taxon>
    </lineage>
</organism>
<name>RGF10_ARATH</name>
<evidence type="ECO:0000250" key="1">
    <source>
        <dbReference type="UniProtKB" id="O49519"/>
    </source>
</evidence>
<evidence type="ECO:0000250" key="2">
    <source>
        <dbReference type="UniProtKB" id="Q3E880"/>
    </source>
</evidence>
<evidence type="ECO:0000255" key="3"/>
<evidence type="ECO:0000255" key="4">
    <source>
        <dbReference type="PROSITE-ProRule" id="PRU00498"/>
    </source>
</evidence>
<evidence type="ECO:0000255" key="5">
    <source>
        <dbReference type="PROSITE-ProRule" id="PRU00768"/>
    </source>
</evidence>
<evidence type="ECO:0000256" key="6">
    <source>
        <dbReference type="SAM" id="MobiDB-lite"/>
    </source>
</evidence>
<evidence type="ECO:0000269" key="7">
    <source>
    </source>
</evidence>
<evidence type="ECO:0000269" key="8">
    <source>
    </source>
</evidence>
<evidence type="ECO:0000303" key="9">
    <source>
    </source>
</evidence>
<evidence type="ECO:0000303" key="10">
    <source>
    </source>
</evidence>
<evidence type="ECO:0000305" key="11"/>
<evidence type="ECO:0000312" key="12">
    <source>
        <dbReference type="Araport" id="AT3G60650"/>
    </source>
</evidence>
<evidence type="ECO:0000312" key="13">
    <source>
        <dbReference type="EMBL" id="CAB82669.1"/>
    </source>
</evidence>
<reference key="1">
    <citation type="journal article" date="2000" name="Nature">
        <title>Sequence and analysis of chromosome 3 of the plant Arabidopsis thaliana.</title>
        <authorList>
            <person name="Salanoubat M."/>
            <person name="Lemcke K."/>
            <person name="Rieger M."/>
            <person name="Ansorge W."/>
            <person name="Unseld M."/>
            <person name="Fartmann B."/>
            <person name="Valle G."/>
            <person name="Bloecker H."/>
            <person name="Perez-Alonso M."/>
            <person name="Obermaier B."/>
            <person name="Delseny M."/>
            <person name="Boutry M."/>
            <person name="Grivell L.A."/>
            <person name="Mache R."/>
            <person name="Puigdomenech P."/>
            <person name="De Simone V."/>
            <person name="Choisne N."/>
            <person name="Artiguenave F."/>
            <person name="Robert C."/>
            <person name="Brottier P."/>
            <person name="Wincker P."/>
            <person name="Cattolico L."/>
            <person name="Weissenbach J."/>
            <person name="Saurin W."/>
            <person name="Quetier F."/>
            <person name="Schaefer M."/>
            <person name="Mueller-Auer S."/>
            <person name="Gabel C."/>
            <person name="Fuchs M."/>
            <person name="Benes V."/>
            <person name="Wurmbach E."/>
            <person name="Drzonek H."/>
            <person name="Erfle H."/>
            <person name="Jordan N."/>
            <person name="Bangert S."/>
            <person name="Wiedelmann R."/>
            <person name="Kranz H."/>
            <person name="Voss H."/>
            <person name="Holland R."/>
            <person name="Brandt P."/>
            <person name="Nyakatura G."/>
            <person name="Vezzi A."/>
            <person name="D'Angelo M."/>
            <person name="Pallavicini A."/>
            <person name="Toppo S."/>
            <person name="Simionati B."/>
            <person name="Conrad A."/>
            <person name="Hornischer K."/>
            <person name="Kauer G."/>
            <person name="Loehnert T.-H."/>
            <person name="Nordsiek G."/>
            <person name="Reichelt J."/>
            <person name="Scharfe M."/>
            <person name="Schoen O."/>
            <person name="Bargues M."/>
            <person name="Terol J."/>
            <person name="Climent J."/>
            <person name="Navarro P."/>
            <person name="Collado C."/>
            <person name="Perez-Perez A."/>
            <person name="Ottenwaelder B."/>
            <person name="Duchemin D."/>
            <person name="Cooke R."/>
            <person name="Laudie M."/>
            <person name="Berger-Llauro C."/>
            <person name="Purnelle B."/>
            <person name="Masuy D."/>
            <person name="de Haan M."/>
            <person name="Maarse A.C."/>
            <person name="Alcaraz J.-P."/>
            <person name="Cottet A."/>
            <person name="Casacuberta E."/>
            <person name="Monfort A."/>
            <person name="Argiriou A."/>
            <person name="Flores M."/>
            <person name="Liguori R."/>
            <person name="Vitale D."/>
            <person name="Mannhaupt G."/>
            <person name="Haase D."/>
            <person name="Schoof H."/>
            <person name="Rudd S."/>
            <person name="Zaccaria P."/>
            <person name="Mewes H.-W."/>
            <person name="Mayer K.F.X."/>
            <person name="Kaul S."/>
            <person name="Town C.D."/>
            <person name="Koo H.L."/>
            <person name="Tallon L.J."/>
            <person name="Jenkins J."/>
            <person name="Rooney T."/>
            <person name="Rizzo M."/>
            <person name="Walts A."/>
            <person name="Utterback T."/>
            <person name="Fujii C.Y."/>
            <person name="Shea T.P."/>
            <person name="Creasy T.H."/>
            <person name="Haas B."/>
            <person name="Maiti R."/>
            <person name="Wu D."/>
            <person name="Peterson J."/>
            <person name="Van Aken S."/>
            <person name="Pai G."/>
            <person name="Militscher J."/>
            <person name="Sellers P."/>
            <person name="Gill J.E."/>
            <person name="Feldblyum T.V."/>
            <person name="Preuss D."/>
            <person name="Lin X."/>
            <person name="Nierman W.C."/>
            <person name="Salzberg S.L."/>
            <person name="White O."/>
            <person name="Venter J.C."/>
            <person name="Fraser C.M."/>
            <person name="Kaneko T."/>
            <person name="Nakamura Y."/>
            <person name="Sato S."/>
            <person name="Kato T."/>
            <person name="Asamizu E."/>
            <person name="Sasamoto S."/>
            <person name="Kimura T."/>
            <person name="Idesawa K."/>
            <person name="Kawashima K."/>
            <person name="Kishida Y."/>
            <person name="Kiyokawa C."/>
            <person name="Kohara M."/>
            <person name="Matsumoto M."/>
            <person name="Matsuno A."/>
            <person name="Muraki A."/>
            <person name="Nakayama S."/>
            <person name="Nakazaki N."/>
            <person name="Shinpo S."/>
            <person name="Takeuchi C."/>
            <person name="Wada T."/>
            <person name="Watanabe A."/>
            <person name="Yamada M."/>
            <person name="Yasuda M."/>
            <person name="Tabata S."/>
        </authorList>
    </citation>
    <scope>NUCLEOTIDE SEQUENCE [LARGE SCALE GENOMIC DNA]</scope>
    <source>
        <strain>cv. Columbia</strain>
    </source>
</reference>
<reference key="2">
    <citation type="journal article" date="2017" name="Plant J.">
        <title>Araport11: a complete reannotation of the Arabidopsis thaliana reference genome.</title>
        <authorList>
            <person name="Cheng C.Y."/>
            <person name="Krishnakumar V."/>
            <person name="Chan A.P."/>
            <person name="Thibaud-Nissen F."/>
            <person name="Schobel S."/>
            <person name="Town C.D."/>
        </authorList>
    </citation>
    <scope>GENOME REANNOTATION</scope>
    <source>
        <strain>cv. Columbia</strain>
    </source>
</reference>
<reference key="3">
    <citation type="journal article" date="2012" name="Mol. Plant">
        <title>A putative nuclear CLE-like (CLEL) peptide precursor regulates root growth in Arabidopsis.</title>
        <authorList>
            <person name="Meng L."/>
            <person name="Buchanan B.B."/>
            <person name="Feldman L.J."/>
            <person name="Luan S."/>
        </authorList>
    </citation>
    <scope>FUNCTION</scope>
    <scope>TISSUE SPECIFICITY</scope>
    <scope>DEVELOPMENTAL STAGE</scope>
    <scope>SUBCELLULAR LOCATION</scope>
    <scope>INDUCTION BY AUXIN</scope>
    <source>
        <strain>cv. Columbia</strain>
    </source>
</reference>
<reference key="4">
    <citation type="journal article" date="2016" name="Proc. Natl. Acad. Sci. U.S.A.">
        <title>Identification of three LRR-RKs involved in perception of root meristem growth factor in Arabidopsis.</title>
        <authorList>
            <person name="Shinohara H."/>
            <person name="Mori A."/>
            <person name="Yasue N."/>
            <person name="Sumida K."/>
            <person name="Matsubayashi Y."/>
        </authorList>
    </citation>
    <scope>INTERACTION WITH RGI1; RGI2 AND RGI3</scope>
    <source>
        <strain>cv. Columbia</strain>
    </source>
</reference>
<accession>F4JBX1</accession>
<accession>Q9LZZ8</accession>
<sequence>MDMLRSACFYFLLIVFVILSWSLLCDSRHLGHMEKKLSVNLDLLNKDNEEITKLEAPSTNKTNTLLSQSHAVVNHGDNGQINGKKTKEIHRVKRASDKKVSSKRVSRTWKIPKYPKKQPKSDQEHPGFNLDYMQPTTHPPHHN</sequence>
<dbReference type="EMBL" id="AL162295">
    <property type="protein sequence ID" value="CAB82669.1"/>
    <property type="status" value="ALT_SEQ"/>
    <property type="molecule type" value="Genomic_DNA"/>
</dbReference>
<dbReference type="EMBL" id="CP002686">
    <property type="protein sequence ID" value="AEE80093.2"/>
    <property type="molecule type" value="Genomic_DNA"/>
</dbReference>
<dbReference type="PIR" id="T47876">
    <property type="entry name" value="T47876"/>
</dbReference>
<dbReference type="RefSeq" id="NP_001319807.1">
    <property type="nucleotide sequence ID" value="NM_001340053.1"/>
</dbReference>
<dbReference type="STRING" id="3702.F4JBX1"/>
<dbReference type="GlyCosmos" id="F4JBX1">
    <property type="glycosylation" value="1 site, No reported glycans"/>
</dbReference>
<dbReference type="GlyGen" id="F4JBX1">
    <property type="glycosylation" value="1 site"/>
</dbReference>
<dbReference type="PaxDb" id="3702-AT3G60650.1"/>
<dbReference type="EnsemblPlants" id="AT3G60650.1">
    <property type="protein sequence ID" value="AT3G60650.1"/>
    <property type="gene ID" value="AT3G60650"/>
</dbReference>
<dbReference type="GeneID" id="825236"/>
<dbReference type="Gramene" id="AT3G60650.1">
    <property type="protein sequence ID" value="AT3G60650.1"/>
    <property type="gene ID" value="AT3G60650"/>
</dbReference>
<dbReference type="KEGG" id="ath:AT3G60650"/>
<dbReference type="Araport" id="AT3G60650"/>
<dbReference type="TAIR" id="AT3G60650"/>
<dbReference type="eggNOG" id="ENOG502R1ST">
    <property type="taxonomic scope" value="Eukaryota"/>
</dbReference>
<dbReference type="HOGENOM" id="CLU_2295601_0_0_1"/>
<dbReference type="InParanoid" id="F4JBX1"/>
<dbReference type="OMA" id="TWKIPKY"/>
<dbReference type="OrthoDB" id="689613at2759"/>
<dbReference type="PRO" id="PR:F4JBX1"/>
<dbReference type="Proteomes" id="UP000006548">
    <property type="component" value="Chromosome 3"/>
</dbReference>
<dbReference type="ExpressionAtlas" id="F4JBX1">
    <property type="expression patterns" value="baseline and differential"/>
</dbReference>
<dbReference type="GO" id="GO:0005576">
    <property type="term" value="C:extracellular region"/>
    <property type="evidence" value="ECO:0007669"/>
    <property type="project" value="UniProtKB-SubCell"/>
</dbReference>
<dbReference type="GO" id="GO:0005634">
    <property type="term" value="C:nucleus"/>
    <property type="evidence" value="ECO:0000314"/>
    <property type="project" value="UniProtKB"/>
</dbReference>
<dbReference type="GO" id="GO:0008083">
    <property type="term" value="F:growth factor activity"/>
    <property type="evidence" value="ECO:0007669"/>
    <property type="project" value="UniProtKB-KW"/>
</dbReference>
<dbReference type="GO" id="GO:0030154">
    <property type="term" value="P:cell differentiation"/>
    <property type="evidence" value="ECO:0007669"/>
    <property type="project" value="UniProtKB-KW"/>
</dbReference>
<dbReference type="GO" id="GO:0048527">
    <property type="term" value="P:lateral root development"/>
    <property type="evidence" value="ECO:0000315"/>
    <property type="project" value="UniProtKB"/>
</dbReference>
<dbReference type="GO" id="GO:2000280">
    <property type="term" value="P:regulation of root development"/>
    <property type="evidence" value="ECO:0000315"/>
    <property type="project" value="UniProtKB"/>
</dbReference>
<dbReference type="GO" id="GO:2000067">
    <property type="term" value="P:regulation of root morphogenesis"/>
    <property type="evidence" value="ECO:0000315"/>
    <property type="project" value="UniProtKB"/>
</dbReference>
<dbReference type="GO" id="GO:0009733">
    <property type="term" value="P:response to auxin"/>
    <property type="evidence" value="ECO:0000270"/>
    <property type="project" value="UniProtKB"/>
</dbReference>
<dbReference type="InterPro" id="IPR053313">
    <property type="entry name" value="RGF"/>
</dbReference>
<dbReference type="PANTHER" id="PTHR34961:SF1">
    <property type="entry name" value="ROOT MERISTEM GROWTH FACTOR 10"/>
    <property type="match status" value="1"/>
</dbReference>
<dbReference type="PANTHER" id="PTHR34961">
    <property type="entry name" value="TRANSMEMBRANE PROTEIN"/>
    <property type="match status" value="1"/>
</dbReference>
<protein>
    <recommendedName>
        <fullName evidence="10">Root meristem growth factor 10</fullName>
        <shortName evidence="10">AtRGF10</shortName>
    </recommendedName>
    <alternativeName>
        <fullName evidence="9">CLAVATA3/ESR (CLE)-related protein CLELn</fullName>
        <shortName evidence="9">AtCLELn</shortName>
        <shortName evidence="9">Nuclear CLE-Like protein</shortName>
    </alternativeName>
    <component>
        <recommendedName>
            <fullName evidence="9">CLELn</fullName>
        </recommendedName>
    </component>
</protein>
<gene>
    <name evidence="10" type="primary">RGF10</name>
    <name evidence="9" type="synonym">CLELn</name>
    <name evidence="12" type="ordered locus">At3g60650</name>
    <name evidence="13" type="ORF">T4C21.60</name>
</gene>